<protein>
    <recommendedName>
        <fullName>Cathepsin E</fullName>
        <ecNumber>3.4.23.34</ecNumber>
    </recommendedName>
</protein>
<gene>
    <name type="primary">Ctse</name>
</gene>
<comment type="function">
    <text evidence="1">May have a role in immune function. Probably involved in the processing of antigenic peptides during MHC class II-mediated antigen presentation. May play a role in activation-induced lymphocyte depletion in the thymus, and in neuronal degeneration and glial cell activation in the brain (By similarity).</text>
</comment>
<comment type="catalytic activity">
    <reaction evidence="6">
        <text>Similar to cathepsin D, but slightly broader specificity.</text>
        <dbReference type="EC" id="3.4.23.34"/>
    </reaction>
</comment>
<comment type="subunit">
    <text evidence="11">Homodimer; disulfide-linked.</text>
</comment>
<comment type="subcellular location">
    <subcellularLocation>
        <location evidence="9 11">Endosome</location>
    </subcellularLocation>
    <text>The proenzyme is localized to the endoplasmic reticulum and Golgi apparatus, while the mature enzyme is localized to the endosome.</text>
</comment>
<comment type="alternative products">
    <event type="alternative splicing"/>
    <isoform>
        <id>P16228-1</id>
        <name>1</name>
        <sequence type="displayed"/>
    </isoform>
    <isoform>
        <id>P16228-2</id>
        <name>2</name>
        <sequence type="described" ref="VSP_005224"/>
    </isoform>
</comment>
<comment type="tissue specificity">
    <text evidence="6 7 9 10 11">Expressed abundantly in lymphocytes and macrophages of the thymus and spleen, and in the M cells of the intestine. In the brain, expression is limited to reactive microglial cells, the large pyrimidial neurons in the cerebral cortex, the CA1 and CA3 pyrimidial neurons of the hippocampus, the large neurons of the neostriatum, and the Purkinje neurons of the cerebellum.</text>
</comment>
<comment type="developmental stage">
    <text evidence="6">Expression increases in all brain regions examined with age, and increases markedly in reactive microglial cells amd CA1 pyrimidial neurons following ischemic injury. In the thymus expression increased steadily up to 8 weeks of age before decreasing to a much lower level by 52 weeks. Expression levels in the spleen and stomach do not appear to vary with age.</text>
</comment>
<comment type="PTM">
    <text evidence="4 8 11">Glycosylated. The nature of the carbohydrate chain varies between cell types. In brain microglia, the proenzyme contains a high mannose-type oligosaccharide, while the mature enzyme contains a complex-type oligosaccharide. In stomach and spleen, the mature enzyme contains a high mannose-type oligosaccharide. In erythrocyte membranes, the mature enzyme contains a complex-type oligosaccharide.</text>
</comment>
<comment type="miscellaneous">
    <text>Administration of dexamethasone results in the conversion of the proenzyme to the mature form in thymocytes.</text>
</comment>
<comment type="similarity">
    <text evidence="13">Belongs to the peptidase A1 family.</text>
</comment>
<feature type="signal peptide" evidence="1">
    <location>
        <begin position="1"/>
        <end position="21"/>
    </location>
</feature>
<feature type="propeptide" id="PRO_0000025980" description="Activation peptide" evidence="4">
    <location>
        <begin position="22"/>
        <end position="58"/>
    </location>
</feature>
<feature type="chain" id="PRO_0000025981" description="Cathepsin E">
    <location>
        <begin position="59"/>
        <end position="398"/>
    </location>
</feature>
<feature type="domain" description="Peptidase A1" evidence="2">
    <location>
        <begin position="80"/>
        <end position="394"/>
    </location>
</feature>
<feature type="active site" evidence="3">
    <location>
        <position position="98"/>
    </location>
</feature>
<feature type="active site" evidence="3">
    <location>
        <position position="283"/>
    </location>
</feature>
<feature type="glycosylation site" description="N-linked (GlcNAc...) asparagine" evidence="13">
    <location>
        <position position="92"/>
    </location>
</feature>
<feature type="disulfide bond" description="Interchain" evidence="13">
    <location>
        <position position="62"/>
    </location>
</feature>
<feature type="disulfide bond" evidence="1">
    <location>
        <begin position="111"/>
        <end position="116"/>
    </location>
</feature>
<feature type="disulfide bond" evidence="1">
    <location>
        <begin position="274"/>
        <end position="278"/>
    </location>
</feature>
<feature type="splice variant" id="VSP_005224" description="In isoform 2." evidence="12">
    <location>
        <begin position="312"/>
        <end position="344"/>
    </location>
</feature>
<feature type="sequence variant" evidence="5">
    <original>P</original>
    <variation>S</variation>
    <location>
        <position position="114"/>
    </location>
</feature>
<feature type="sequence conflict" description="In Ref. 2; AAH62002." evidence="13" ref="2">
    <original>M</original>
    <variation>V</variation>
    <location>
        <position position="55"/>
    </location>
</feature>
<feature type="sequence conflict" description="In Ref. 3; AA sequence." evidence="13" ref="3">
    <original>E</original>
    <variation>N</variation>
    <location>
        <position position="79"/>
    </location>
</feature>
<feature type="sequence conflict" description="In Ref. 3; AA sequence." evidence="13" ref="3">
    <original>TV</original>
    <variation>SR</variation>
    <location>
        <begin position="83"/>
        <end position="84"/>
    </location>
</feature>
<organism>
    <name type="scientific">Rattus norvegicus</name>
    <name type="common">Rat</name>
    <dbReference type="NCBI Taxonomy" id="10116"/>
    <lineage>
        <taxon>Eukaryota</taxon>
        <taxon>Metazoa</taxon>
        <taxon>Chordata</taxon>
        <taxon>Craniata</taxon>
        <taxon>Vertebrata</taxon>
        <taxon>Euteleostomi</taxon>
        <taxon>Mammalia</taxon>
        <taxon>Eutheria</taxon>
        <taxon>Euarchontoglires</taxon>
        <taxon>Glires</taxon>
        <taxon>Rodentia</taxon>
        <taxon>Myomorpha</taxon>
        <taxon>Muroidea</taxon>
        <taxon>Muridae</taxon>
        <taxon>Murinae</taxon>
        <taxon>Rattus</taxon>
    </lineage>
</organism>
<sequence>MKPLFVLLLLLLLLDLAQAQGVLHRVPLRRHQSLRKKLRAQGQLSDFWRSHNLDMIEFSESCNVDKGINEPLINYLDMEYFGTVSIGSPSQNFTVIFDTGSSNLWVPSVYCTSPACKAHPVFHPSQSSTYMEVGNHFSIQYGTGSLTGIIGADQVSVEGLTVEGQQFGESVKEPGQTFVNAEFDGILGLGYPSLAVGGVTPVFDNMMAQNLVALPMFSVYLSSDPQGGSGSELTFGGYDPSHFSGSLNWIPVTKQGYWQIALDGIQVGDTVMFCSEGCQAIVDTGTSLITGPPKKIKQLQEAIGATPMDGEYAVDCATLNMMPNVTFLINGVSYTLSPTAYILPDLVDGMQFCGSGFQGLDIQPPAGPLWILGDVFIRKFYSVFDRGNNQVGLAPAVP</sequence>
<evidence type="ECO:0000250" key="1"/>
<evidence type="ECO:0000255" key="2">
    <source>
        <dbReference type="PROSITE-ProRule" id="PRU01103"/>
    </source>
</evidence>
<evidence type="ECO:0000255" key="3">
    <source>
        <dbReference type="PROSITE-ProRule" id="PRU10094"/>
    </source>
</evidence>
<evidence type="ECO:0000269" key="4">
    <source>
    </source>
</evidence>
<evidence type="ECO:0000269" key="5">
    <source>
    </source>
</evidence>
<evidence type="ECO:0000269" key="6">
    <source>
    </source>
</evidence>
<evidence type="ECO:0000269" key="7">
    <source>
    </source>
</evidence>
<evidence type="ECO:0000269" key="8">
    <source>
    </source>
</evidence>
<evidence type="ECO:0000269" key="9">
    <source>
    </source>
</evidence>
<evidence type="ECO:0000269" key="10">
    <source>
    </source>
</evidence>
<evidence type="ECO:0000269" key="11">
    <source>
    </source>
</evidence>
<evidence type="ECO:0000303" key="12">
    <source>
    </source>
</evidence>
<evidence type="ECO:0000305" key="13"/>
<proteinExistence type="evidence at protein level"/>
<keyword id="KW-0025">Alternative splicing</keyword>
<keyword id="KW-0064">Aspartyl protease</keyword>
<keyword id="KW-0068">Autocatalytic cleavage</keyword>
<keyword id="KW-0903">Direct protein sequencing</keyword>
<keyword id="KW-1015">Disulfide bond</keyword>
<keyword id="KW-0967">Endosome</keyword>
<keyword id="KW-0325">Glycoprotein</keyword>
<keyword id="KW-0378">Hydrolase</keyword>
<keyword id="KW-0645">Protease</keyword>
<keyword id="KW-1185">Reference proteome</keyword>
<keyword id="KW-0732">Signal</keyword>
<keyword id="KW-0865">Zymogen</keyword>
<accession>P16228</accession>
<accession>Q63701</accession>
<name>CATE_RAT</name>
<reference key="1">
    <citation type="journal article" date="1995" name="Arch. Biochem. Biophys.">
        <title>Isolation and sequencing of two cDNA clones encoding rat spleen cathepsin E and analysis of the activation of purified procathepsin E.</title>
        <authorList>
            <person name="Okamoto K."/>
            <person name="Yu H."/>
            <person name="Misumi Y."/>
            <person name="Ikehara Y."/>
            <person name="Yamamoto K."/>
        </authorList>
    </citation>
    <scope>NUCLEOTIDE SEQUENCE [MRNA] (ISOFORMS 1 AND 2)</scope>
    <scope>VARIANT SER-114</scope>
    <source>
        <tissue>Spleen</tissue>
    </source>
</reference>
<reference key="2">
    <citation type="journal article" date="2004" name="Genome Res.">
        <title>The status, quality, and expansion of the NIH full-length cDNA project: the Mammalian Gene Collection (MGC).</title>
        <authorList>
            <consortium name="The MGC Project Team"/>
        </authorList>
    </citation>
    <scope>NUCLEOTIDE SEQUENCE [LARGE SCALE MRNA] (ISOFORM 1)</scope>
    <source>
        <tissue>Prostate</tissue>
    </source>
</reference>
<reference key="3">
    <citation type="journal article" date="1990" name="Biochem. Biophys. Res. Commun.">
        <title>Structural studies of rat cathepsin E: amino-terminal structure and carbohydrate units of mature enzyme.</title>
        <authorList>
            <person name="Yonezawa S."/>
            <person name="Takahashi T."/>
            <person name="Ichinose M."/>
            <person name="Miki K."/>
            <person name="Tanaka J."/>
            <person name="Gasa S."/>
        </authorList>
    </citation>
    <scope>PROTEIN SEQUENCE OF 59-110</scope>
    <scope>GLYCOSYLATION</scope>
</reference>
<reference key="4">
    <citation type="journal article" date="1993" name="Arch. Biochem. Biophys.">
        <title>Isolation and biochemical characterization of procathepsin E from human erythrocyte membranes.</title>
        <authorList>
            <person name="Takeda-Ezaki M."/>
            <person name="Yamamoto K."/>
        </authorList>
    </citation>
    <scope>GLYCOSYLATION</scope>
</reference>
<reference key="5">
    <citation type="journal article" date="1993" name="Exp. Neurol.">
        <title>Transient forebrain ischemia induces increased expression and specific localization of cathepsins E and D in rat hippocampus and neostriatum.</title>
        <authorList>
            <person name="Nakanishi H."/>
            <person name="Tsukuba T."/>
            <person name="Kondou T."/>
            <person name="Tanaka T."/>
            <person name="Yamamoto K."/>
        </authorList>
    </citation>
    <scope>TISSUE SPECIFICITY</scope>
</reference>
<reference key="6">
    <citation type="journal article" date="1993" name="Histochemistry">
        <title>Cathepsin E in follicle associated epithelium of intestine and tonsils: localization to M cells and possible role in antigen processing.</title>
        <authorList>
            <person name="Finzi G."/>
            <person name="Cornaggia M."/>
            <person name="Capella C."/>
            <person name="Fiocca R."/>
            <person name="Bosi F."/>
            <person name="Solcia E."/>
            <person name="Samloff I.M."/>
        </authorList>
    </citation>
    <scope>SUBCELLULAR LOCATION</scope>
    <scope>TISSUE SPECIFICITY</scope>
</reference>
<reference key="7">
    <citation type="journal article" date="1994" name="Exp. Neurol.">
        <title>Age-related changes in activities and localizations of cathepsins D, E, B, and L in the rat brain tissues.</title>
        <authorList>
            <person name="Nakanishi H."/>
            <person name="Tominaga K."/>
            <person name="Amano T."/>
            <person name="Hirotsu I."/>
            <person name="Inoue T."/>
            <person name="Yamamoto K."/>
        </authorList>
    </citation>
    <scope>CATALYTIC ACTIVITY</scope>
    <scope>TISSUE SPECIFICITY</scope>
    <scope>DEVELOPMENTAL STAGE</scope>
</reference>
<reference key="8">
    <citation type="journal article" date="1996" name="Arch. Biochem. Biophys.">
        <title>Age-related and dexamethasone-induced changes in cathepsins E and D in rat thymic and splenic cells.</title>
        <authorList>
            <person name="Nishishita K."/>
            <person name="Sakai H."/>
            <person name="Sakai E."/>
            <person name="Kato Y."/>
            <person name="Yamamoto K."/>
        </authorList>
    </citation>
    <scope>TISSUE SPECIFICITY</scope>
    <scope>DEXAMETHASONE ADMINISTRATION</scope>
</reference>
<reference key="9">
    <citation type="journal article" date="1998" name="J. Neurochem.">
        <title>Identification of cellular compartments involved in processing of cathepsin E in primary cultures of rat microglia.</title>
        <authorList>
            <person name="Sastradipura D.F."/>
            <person name="Nakanishi H."/>
            <person name="Tsukuba T."/>
            <person name="Nishishita K."/>
            <person name="Sakai H."/>
            <person name="Kato Y."/>
            <person name="Gotow T."/>
            <person name="Uchiyama Y."/>
            <person name="Yamamoto K."/>
        </authorList>
    </citation>
    <scope>SUBUNIT</scope>
    <scope>SUBCELLULAR LOCATION</scope>
    <scope>TISSUE SPECIFICITY</scope>
    <scope>GLYCOSYLATION</scope>
</reference>
<dbReference type="EC" id="3.4.23.34"/>
<dbReference type="EMBL" id="D38104">
    <property type="protein sequence ID" value="BAA07285.1"/>
    <property type="molecule type" value="mRNA"/>
</dbReference>
<dbReference type="EMBL" id="D45187">
    <property type="protein sequence ID" value="BAA08128.1"/>
    <property type="molecule type" value="mRNA"/>
</dbReference>
<dbReference type="EMBL" id="BC062002">
    <property type="protein sequence ID" value="AAH62002.1"/>
    <property type="molecule type" value="mRNA"/>
</dbReference>
<dbReference type="PIR" id="A34657">
    <property type="entry name" value="A34657"/>
</dbReference>
<dbReference type="PIR" id="S66465">
    <property type="entry name" value="S66465"/>
</dbReference>
<dbReference type="PIR" id="S66466">
    <property type="entry name" value="S66466"/>
</dbReference>
<dbReference type="RefSeq" id="NP_001388196.1">
    <molecule id="P16228-1"/>
    <property type="nucleotide sequence ID" value="NM_001401267.1"/>
</dbReference>
<dbReference type="RefSeq" id="NP_001416397.1">
    <molecule id="P16228-1"/>
    <property type="nucleotide sequence ID" value="NM_001429468.1"/>
</dbReference>
<dbReference type="RefSeq" id="NP_037070.2">
    <molecule id="P16228-2"/>
    <property type="nucleotide sequence ID" value="NM_012938.2"/>
</dbReference>
<dbReference type="RefSeq" id="XP_006249810.1">
    <property type="nucleotide sequence ID" value="XM_006249748.2"/>
</dbReference>
<dbReference type="RefSeq" id="XP_006249811.1">
    <property type="nucleotide sequence ID" value="XM_006249749.2"/>
</dbReference>
<dbReference type="RefSeq" id="XP_017454166.1">
    <property type="nucleotide sequence ID" value="XM_017598677.1"/>
</dbReference>
<dbReference type="SMR" id="P16228"/>
<dbReference type="FunCoup" id="P16228">
    <property type="interactions" value="111"/>
</dbReference>
<dbReference type="STRING" id="10116.ENSRNOP00000048353"/>
<dbReference type="MEROPS" id="A01.010"/>
<dbReference type="GlyCosmos" id="P16228">
    <property type="glycosylation" value="1 site, No reported glycans"/>
</dbReference>
<dbReference type="GlyGen" id="P16228">
    <property type="glycosylation" value="1 site"/>
</dbReference>
<dbReference type="PhosphoSitePlus" id="P16228"/>
<dbReference type="PaxDb" id="10116-ENSRNOP00000048353"/>
<dbReference type="Ensembl" id="ENSRNOT00000009241.4">
    <molecule id="P16228-2"/>
    <property type="protein sequence ID" value="ENSRNOP00000009242.2"/>
    <property type="gene ID" value="ENSRNOG00000006963.7"/>
</dbReference>
<dbReference type="Ensembl" id="ENSRNOT00000048391.5">
    <molecule id="P16228-1"/>
    <property type="protein sequence ID" value="ENSRNOP00000048353.2"/>
    <property type="gene ID" value="ENSRNOG00000006963.7"/>
</dbReference>
<dbReference type="GeneID" id="25424"/>
<dbReference type="KEGG" id="rno:25424"/>
<dbReference type="UCSC" id="RGD:2446">
    <molecule id="P16228-1"/>
    <property type="organism name" value="rat"/>
</dbReference>
<dbReference type="AGR" id="RGD:2446"/>
<dbReference type="CTD" id="1510"/>
<dbReference type="RGD" id="2446">
    <property type="gene designation" value="Ctse"/>
</dbReference>
<dbReference type="eggNOG" id="KOG1339">
    <property type="taxonomic scope" value="Eukaryota"/>
</dbReference>
<dbReference type="GeneTree" id="ENSGT00940000161300"/>
<dbReference type="HOGENOM" id="CLU_013253_3_0_1"/>
<dbReference type="InParanoid" id="P16228"/>
<dbReference type="OMA" id="YGVECAN"/>
<dbReference type="PhylomeDB" id="P16228"/>
<dbReference type="TreeFam" id="TF314990"/>
<dbReference type="BRENDA" id="3.4.23.34">
    <property type="organism ID" value="5301"/>
</dbReference>
<dbReference type="Reactome" id="R-RNO-2132295">
    <property type="pathway name" value="MHC class II antigen presentation"/>
</dbReference>
<dbReference type="PRO" id="PR:P16228"/>
<dbReference type="Proteomes" id="UP000002494">
    <property type="component" value="Chromosome 13"/>
</dbReference>
<dbReference type="Bgee" id="ENSRNOG00000006963">
    <property type="expression patterns" value="Expressed in stomach and 17 other cell types or tissues"/>
</dbReference>
<dbReference type="GO" id="GO:0005768">
    <property type="term" value="C:endosome"/>
    <property type="evidence" value="ECO:0000314"/>
    <property type="project" value="UniProtKB"/>
</dbReference>
<dbReference type="GO" id="GO:0004190">
    <property type="term" value="F:aspartic-type endopeptidase activity"/>
    <property type="evidence" value="ECO:0000314"/>
    <property type="project" value="UniProtKB"/>
</dbReference>
<dbReference type="GO" id="GO:0042802">
    <property type="term" value="F:identical protein binding"/>
    <property type="evidence" value="ECO:0000266"/>
    <property type="project" value="RGD"/>
</dbReference>
<dbReference type="GO" id="GO:0008233">
    <property type="term" value="F:peptidase activity"/>
    <property type="evidence" value="ECO:0000266"/>
    <property type="project" value="RGD"/>
</dbReference>
<dbReference type="GO" id="GO:0019886">
    <property type="term" value="P:antigen processing and presentation of exogenous peptide antigen via MHC class II"/>
    <property type="evidence" value="ECO:0000314"/>
    <property type="project" value="UniProtKB"/>
</dbReference>
<dbReference type="GO" id="GO:0016540">
    <property type="term" value="P:protein autoprocessing"/>
    <property type="evidence" value="ECO:0000315"/>
    <property type="project" value="RGD"/>
</dbReference>
<dbReference type="GO" id="GO:0006508">
    <property type="term" value="P:proteolysis"/>
    <property type="evidence" value="ECO:0000266"/>
    <property type="project" value="RGD"/>
</dbReference>
<dbReference type="FunFam" id="2.40.70.10:FF:000006">
    <property type="entry name" value="Cathepsin E"/>
    <property type="match status" value="1"/>
</dbReference>
<dbReference type="FunFam" id="2.40.70.10:FF:000004">
    <property type="entry name" value="Pepsin A"/>
    <property type="match status" value="1"/>
</dbReference>
<dbReference type="Gene3D" id="6.10.140.60">
    <property type="match status" value="1"/>
</dbReference>
<dbReference type="Gene3D" id="2.40.70.10">
    <property type="entry name" value="Acid Proteases"/>
    <property type="match status" value="2"/>
</dbReference>
<dbReference type="InterPro" id="IPR001461">
    <property type="entry name" value="Aspartic_peptidase_A1"/>
</dbReference>
<dbReference type="InterPro" id="IPR001969">
    <property type="entry name" value="Aspartic_peptidase_AS"/>
</dbReference>
<dbReference type="InterPro" id="IPR012848">
    <property type="entry name" value="Aspartic_peptidase_N"/>
</dbReference>
<dbReference type="InterPro" id="IPR033121">
    <property type="entry name" value="PEPTIDASE_A1"/>
</dbReference>
<dbReference type="InterPro" id="IPR021109">
    <property type="entry name" value="Peptidase_aspartic_dom_sf"/>
</dbReference>
<dbReference type="PANTHER" id="PTHR47966">
    <property type="entry name" value="BETA-SITE APP-CLEAVING ENZYME, ISOFORM A-RELATED"/>
    <property type="match status" value="1"/>
</dbReference>
<dbReference type="PANTHER" id="PTHR47966:SF26">
    <property type="entry name" value="CATHEPSIN E"/>
    <property type="match status" value="1"/>
</dbReference>
<dbReference type="Pfam" id="PF07966">
    <property type="entry name" value="A1_Propeptide"/>
    <property type="match status" value="1"/>
</dbReference>
<dbReference type="Pfam" id="PF00026">
    <property type="entry name" value="Asp"/>
    <property type="match status" value="1"/>
</dbReference>
<dbReference type="PRINTS" id="PR00792">
    <property type="entry name" value="PEPSIN"/>
</dbReference>
<dbReference type="SUPFAM" id="SSF50630">
    <property type="entry name" value="Acid proteases"/>
    <property type="match status" value="1"/>
</dbReference>
<dbReference type="PROSITE" id="PS00141">
    <property type="entry name" value="ASP_PROTEASE"/>
    <property type="match status" value="2"/>
</dbReference>
<dbReference type="PROSITE" id="PS51767">
    <property type="entry name" value="PEPTIDASE_A1"/>
    <property type="match status" value="1"/>
</dbReference>